<keyword id="KW-0963">Cytoplasm</keyword>
<keyword id="KW-0378">Hydrolase</keyword>
<keyword id="KW-0694">RNA-binding</keyword>
<keyword id="KW-0820">tRNA-binding</keyword>
<comment type="function">
    <text evidence="1">Hydrolyzes ribosome-free peptidyl-tRNAs (with 1 or more amino acids incorporated), which drop off the ribosome during protein synthesis, or as a result of ribosome stalling.</text>
</comment>
<comment type="function">
    <text evidence="1">Catalyzes the release of premature peptidyl moieties from peptidyl-tRNA molecules trapped in stalled 50S ribosomal subunits, and thus maintains levels of free tRNAs and 50S ribosomes.</text>
</comment>
<comment type="catalytic activity">
    <reaction evidence="1">
        <text>an N-acyl-L-alpha-aminoacyl-tRNA + H2O = an N-acyl-L-amino acid + a tRNA + H(+)</text>
        <dbReference type="Rhea" id="RHEA:54448"/>
        <dbReference type="Rhea" id="RHEA-COMP:10123"/>
        <dbReference type="Rhea" id="RHEA-COMP:13883"/>
        <dbReference type="ChEBI" id="CHEBI:15377"/>
        <dbReference type="ChEBI" id="CHEBI:15378"/>
        <dbReference type="ChEBI" id="CHEBI:59874"/>
        <dbReference type="ChEBI" id="CHEBI:78442"/>
        <dbReference type="ChEBI" id="CHEBI:138191"/>
        <dbReference type="EC" id="3.1.1.29"/>
    </reaction>
</comment>
<comment type="subunit">
    <text evidence="1">Monomer.</text>
</comment>
<comment type="subcellular location">
    <subcellularLocation>
        <location evidence="1">Cytoplasm</location>
    </subcellularLocation>
</comment>
<comment type="similarity">
    <text evidence="1">Belongs to the PTH family.</text>
</comment>
<reference key="1">
    <citation type="submission" date="2006-03" db="EMBL/GenBank/DDBJ databases">
        <title>Complete sequence of Rhodopseudomonas palustris BisB18.</title>
        <authorList>
            <consortium name="US DOE Joint Genome Institute"/>
            <person name="Copeland A."/>
            <person name="Lucas S."/>
            <person name="Lapidus A."/>
            <person name="Barry K."/>
            <person name="Detter J.C."/>
            <person name="Glavina del Rio T."/>
            <person name="Hammon N."/>
            <person name="Israni S."/>
            <person name="Dalin E."/>
            <person name="Tice H."/>
            <person name="Pitluck S."/>
            <person name="Chain P."/>
            <person name="Malfatti S."/>
            <person name="Shin M."/>
            <person name="Vergez L."/>
            <person name="Schmutz J."/>
            <person name="Larimer F."/>
            <person name="Land M."/>
            <person name="Hauser L."/>
            <person name="Pelletier D.A."/>
            <person name="Kyrpides N."/>
            <person name="Anderson I."/>
            <person name="Oda Y."/>
            <person name="Harwood C.S."/>
            <person name="Richardson P."/>
        </authorList>
    </citation>
    <scope>NUCLEOTIDE SEQUENCE [LARGE SCALE GENOMIC DNA]</scope>
    <source>
        <strain>BisB18</strain>
    </source>
</reference>
<accession>Q219F8</accession>
<feature type="chain" id="PRO_0000264092" description="Peptidyl-tRNA hydrolase">
    <location>
        <begin position="1"/>
        <end position="201"/>
    </location>
</feature>
<feature type="active site" description="Proton acceptor" evidence="1">
    <location>
        <position position="19"/>
    </location>
</feature>
<feature type="binding site" evidence="1">
    <location>
        <position position="14"/>
    </location>
    <ligand>
        <name>tRNA</name>
        <dbReference type="ChEBI" id="CHEBI:17843"/>
    </ligand>
</feature>
<feature type="binding site" evidence="1">
    <location>
        <position position="64"/>
    </location>
    <ligand>
        <name>tRNA</name>
        <dbReference type="ChEBI" id="CHEBI:17843"/>
    </ligand>
</feature>
<feature type="binding site" evidence="1">
    <location>
        <position position="66"/>
    </location>
    <ligand>
        <name>tRNA</name>
        <dbReference type="ChEBI" id="CHEBI:17843"/>
    </ligand>
</feature>
<feature type="binding site" evidence="1">
    <location>
        <position position="112"/>
    </location>
    <ligand>
        <name>tRNA</name>
        <dbReference type="ChEBI" id="CHEBI:17843"/>
    </ligand>
</feature>
<feature type="site" description="Discriminates between blocked and unblocked aminoacyl-tRNA" evidence="1">
    <location>
        <position position="9"/>
    </location>
</feature>
<feature type="site" description="Stabilizes the basic form of H active site to accept a proton" evidence="1">
    <location>
        <position position="91"/>
    </location>
</feature>
<organism>
    <name type="scientific">Rhodopseudomonas palustris (strain BisB18)</name>
    <dbReference type="NCBI Taxonomy" id="316056"/>
    <lineage>
        <taxon>Bacteria</taxon>
        <taxon>Pseudomonadati</taxon>
        <taxon>Pseudomonadota</taxon>
        <taxon>Alphaproteobacteria</taxon>
        <taxon>Hyphomicrobiales</taxon>
        <taxon>Nitrobacteraceae</taxon>
        <taxon>Rhodopseudomonas</taxon>
    </lineage>
</organism>
<sequence length="201" mass="21848">MRLLVGLGNPGAKYQGNRHNIGFMVLDEMARRHGFSPWRRRFQGETADGSIGGERVTLLKPLTYMNDSGRAVQDAASFFKLGLPDITVVHDEIELPAAKLRVKVGGGIAGHNGLRSISAHVGNDYRRVRIGVGHPGAKELVHGHVLNDFAKSERPWVEAMIEAIVEHAGLLVDGRDSTFQNKVHLALQAKGFLDNNDGSAA</sequence>
<evidence type="ECO:0000255" key="1">
    <source>
        <dbReference type="HAMAP-Rule" id="MF_00083"/>
    </source>
</evidence>
<protein>
    <recommendedName>
        <fullName evidence="1">Peptidyl-tRNA hydrolase</fullName>
        <shortName evidence="1">Pth</shortName>
        <ecNumber evidence="1">3.1.1.29</ecNumber>
    </recommendedName>
</protein>
<proteinExistence type="inferred from homology"/>
<dbReference type="EC" id="3.1.1.29" evidence="1"/>
<dbReference type="EMBL" id="CP000301">
    <property type="protein sequence ID" value="ABD86978.1"/>
    <property type="molecule type" value="Genomic_DNA"/>
</dbReference>
<dbReference type="SMR" id="Q219F8"/>
<dbReference type="STRING" id="316056.RPC_1416"/>
<dbReference type="KEGG" id="rpc:RPC_1416"/>
<dbReference type="eggNOG" id="COG0193">
    <property type="taxonomic scope" value="Bacteria"/>
</dbReference>
<dbReference type="HOGENOM" id="CLU_062456_1_0_5"/>
<dbReference type="OrthoDB" id="9800507at2"/>
<dbReference type="GO" id="GO:0005737">
    <property type="term" value="C:cytoplasm"/>
    <property type="evidence" value="ECO:0007669"/>
    <property type="project" value="UniProtKB-SubCell"/>
</dbReference>
<dbReference type="GO" id="GO:0004045">
    <property type="term" value="F:peptidyl-tRNA hydrolase activity"/>
    <property type="evidence" value="ECO:0007669"/>
    <property type="project" value="UniProtKB-UniRule"/>
</dbReference>
<dbReference type="GO" id="GO:0000049">
    <property type="term" value="F:tRNA binding"/>
    <property type="evidence" value="ECO:0007669"/>
    <property type="project" value="UniProtKB-UniRule"/>
</dbReference>
<dbReference type="GO" id="GO:0006515">
    <property type="term" value="P:protein quality control for misfolded or incompletely synthesized proteins"/>
    <property type="evidence" value="ECO:0007669"/>
    <property type="project" value="UniProtKB-UniRule"/>
</dbReference>
<dbReference type="GO" id="GO:0072344">
    <property type="term" value="P:rescue of stalled ribosome"/>
    <property type="evidence" value="ECO:0007669"/>
    <property type="project" value="UniProtKB-UniRule"/>
</dbReference>
<dbReference type="CDD" id="cd00462">
    <property type="entry name" value="PTH"/>
    <property type="match status" value="1"/>
</dbReference>
<dbReference type="FunFam" id="3.40.50.1470:FF:000001">
    <property type="entry name" value="Peptidyl-tRNA hydrolase"/>
    <property type="match status" value="1"/>
</dbReference>
<dbReference type="Gene3D" id="3.40.50.1470">
    <property type="entry name" value="Peptidyl-tRNA hydrolase"/>
    <property type="match status" value="1"/>
</dbReference>
<dbReference type="HAMAP" id="MF_00083">
    <property type="entry name" value="Pept_tRNA_hydro_bact"/>
    <property type="match status" value="1"/>
</dbReference>
<dbReference type="InterPro" id="IPR001328">
    <property type="entry name" value="Pept_tRNA_hydro"/>
</dbReference>
<dbReference type="InterPro" id="IPR018171">
    <property type="entry name" value="Pept_tRNA_hydro_CS"/>
</dbReference>
<dbReference type="InterPro" id="IPR036416">
    <property type="entry name" value="Pept_tRNA_hydro_sf"/>
</dbReference>
<dbReference type="NCBIfam" id="TIGR00447">
    <property type="entry name" value="pth"/>
    <property type="match status" value="1"/>
</dbReference>
<dbReference type="PANTHER" id="PTHR17224">
    <property type="entry name" value="PEPTIDYL-TRNA HYDROLASE"/>
    <property type="match status" value="1"/>
</dbReference>
<dbReference type="PANTHER" id="PTHR17224:SF1">
    <property type="entry name" value="PEPTIDYL-TRNA HYDROLASE"/>
    <property type="match status" value="1"/>
</dbReference>
<dbReference type="Pfam" id="PF01195">
    <property type="entry name" value="Pept_tRNA_hydro"/>
    <property type="match status" value="1"/>
</dbReference>
<dbReference type="SUPFAM" id="SSF53178">
    <property type="entry name" value="Peptidyl-tRNA hydrolase-like"/>
    <property type="match status" value="1"/>
</dbReference>
<dbReference type="PROSITE" id="PS01195">
    <property type="entry name" value="PEPT_TRNA_HYDROL_1"/>
    <property type="match status" value="1"/>
</dbReference>
<dbReference type="PROSITE" id="PS01196">
    <property type="entry name" value="PEPT_TRNA_HYDROL_2"/>
    <property type="match status" value="1"/>
</dbReference>
<gene>
    <name evidence="1" type="primary">pth</name>
    <name type="ordered locus">RPC_1416</name>
</gene>
<name>PTH_RHOPB</name>